<feature type="chain" id="PRO_1000012285" description="Lipoyl synthase">
    <location>
        <begin position="1"/>
        <end position="323"/>
    </location>
</feature>
<feature type="domain" description="Radical SAM core" evidence="2">
    <location>
        <begin position="73"/>
        <end position="289"/>
    </location>
</feature>
<feature type="binding site" evidence="1">
    <location>
        <position position="61"/>
    </location>
    <ligand>
        <name>[4Fe-4S] cluster</name>
        <dbReference type="ChEBI" id="CHEBI:49883"/>
        <label>1</label>
    </ligand>
</feature>
<feature type="binding site" evidence="1">
    <location>
        <position position="66"/>
    </location>
    <ligand>
        <name>[4Fe-4S] cluster</name>
        <dbReference type="ChEBI" id="CHEBI:49883"/>
        <label>1</label>
    </ligand>
</feature>
<feature type="binding site" evidence="1">
    <location>
        <position position="72"/>
    </location>
    <ligand>
        <name>[4Fe-4S] cluster</name>
        <dbReference type="ChEBI" id="CHEBI:49883"/>
        <label>1</label>
    </ligand>
</feature>
<feature type="binding site" evidence="1">
    <location>
        <position position="87"/>
    </location>
    <ligand>
        <name>[4Fe-4S] cluster</name>
        <dbReference type="ChEBI" id="CHEBI:49883"/>
        <label>2</label>
        <note>4Fe-4S-S-AdoMet</note>
    </ligand>
</feature>
<feature type="binding site" evidence="1">
    <location>
        <position position="91"/>
    </location>
    <ligand>
        <name>[4Fe-4S] cluster</name>
        <dbReference type="ChEBI" id="CHEBI:49883"/>
        <label>2</label>
        <note>4Fe-4S-S-AdoMet</note>
    </ligand>
</feature>
<feature type="binding site" evidence="1">
    <location>
        <position position="94"/>
    </location>
    <ligand>
        <name>[4Fe-4S] cluster</name>
        <dbReference type="ChEBI" id="CHEBI:49883"/>
        <label>2</label>
        <note>4Fe-4S-S-AdoMet</note>
    </ligand>
</feature>
<feature type="binding site" evidence="1">
    <location>
        <position position="300"/>
    </location>
    <ligand>
        <name>[4Fe-4S] cluster</name>
        <dbReference type="ChEBI" id="CHEBI:49883"/>
        <label>1</label>
    </ligand>
</feature>
<dbReference type="EC" id="2.8.1.8" evidence="1"/>
<dbReference type="EMBL" id="CP000738">
    <property type="protein sequence ID" value="ABR59935.1"/>
    <property type="molecule type" value="Genomic_DNA"/>
</dbReference>
<dbReference type="RefSeq" id="WP_011975259.1">
    <property type="nucleotide sequence ID" value="NC_009636.1"/>
</dbReference>
<dbReference type="RefSeq" id="YP_001326770.1">
    <property type="nucleotide sequence ID" value="NC_009636.1"/>
</dbReference>
<dbReference type="SMR" id="A6U8F5"/>
<dbReference type="STRING" id="366394.Smed_1083"/>
<dbReference type="GeneID" id="61612135"/>
<dbReference type="KEGG" id="smd:Smed_1083"/>
<dbReference type="PATRIC" id="fig|366394.8.peg.4206"/>
<dbReference type="eggNOG" id="COG0320">
    <property type="taxonomic scope" value="Bacteria"/>
</dbReference>
<dbReference type="HOGENOM" id="CLU_033144_2_1_5"/>
<dbReference type="OrthoDB" id="9787898at2"/>
<dbReference type="UniPathway" id="UPA00538">
    <property type="reaction ID" value="UER00593"/>
</dbReference>
<dbReference type="Proteomes" id="UP000001108">
    <property type="component" value="Chromosome"/>
</dbReference>
<dbReference type="GO" id="GO:0005737">
    <property type="term" value="C:cytoplasm"/>
    <property type="evidence" value="ECO:0007669"/>
    <property type="project" value="UniProtKB-SubCell"/>
</dbReference>
<dbReference type="GO" id="GO:0051539">
    <property type="term" value="F:4 iron, 4 sulfur cluster binding"/>
    <property type="evidence" value="ECO:0007669"/>
    <property type="project" value="UniProtKB-UniRule"/>
</dbReference>
<dbReference type="GO" id="GO:0016992">
    <property type="term" value="F:lipoate synthase activity"/>
    <property type="evidence" value="ECO:0007669"/>
    <property type="project" value="UniProtKB-UniRule"/>
</dbReference>
<dbReference type="GO" id="GO:0046872">
    <property type="term" value="F:metal ion binding"/>
    <property type="evidence" value="ECO:0007669"/>
    <property type="project" value="UniProtKB-KW"/>
</dbReference>
<dbReference type="CDD" id="cd01335">
    <property type="entry name" value="Radical_SAM"/>
    <property type="match status" value="1"/>
</dbReference>
<dbReference type="FunFam" id="3.20.20.70:FF:000040">
    <property type="entry name" value="Lipoyl synthase"/>
    <property type="match status" value="1"/>
</dbReference>
<dbReference type="Gene3D" id="3.20.20.70">
    <property type="entry name" value="Aldolase class I"/>
    <property type="match status" value="1"/>
</dbReference>
<dbReference type="HAMAP" id="MF_00206">
    <property type="entry name" value="Lipoyl_synth"/>
    <property type="match status" value="1"/>
</dbReference>
<dbReference type="InterPro" id="IPR013785">
    <property type="entry name" value="Aldolase_TIM"/>
</dbReference>
<dbReference type="InterPro" id="IPR006638">
    <property type="entry name" value="Elp3/MiaA/NifB-like_rSAM"/>
</dbReference>
<dbReference type="InterPro" id="IPR031691">
    <property type="entry name" value="LIAS_N"/>
</dbReference>
<dbReference type="InterPro" id="IPR003698">
    <property type="entry name" value="Lipoyl_synth"/>
</dbReference>
<dbReference type="InterPro" id="IPR007197">
    <property type="entry name" value="rSAM"/>
</dbReference>
<dbReference type="NCBIfam" id="TIGR00510">
    <property type="entry name" value="lipA"/>
    <property type="match status" value="1"/>
</dbReference>
<dbReference type="NCBIfam" id="NF004019">
    <property type="entry name" value="PRK05481.1"/>
    <property type="match status" value="1"/>
</dbReference>
<dbReference type="NCBIfam" id="NF009544">
    <property type="entry name" value="PRK12928.1"/>
    <property type="match status" value="1"/>
</dbReference>
<dbReference type="PANTHER" id="PTHR10949">
    <property type="entry name" value="LIPOYL SYNTHASE"/>
    <property type="match status" value="1"/>
</dbReference>
<dbReference type="PANTHER" id="PTHR10949:SF0">
    <property type="entry name" value="LIPOYL SYNTHASE, MITOCHONDRIAL"/>
    <property type="match status" value="1"/>
</dbReference>
<dbReference type="Pfam" id="PF16881">
    <property type="entry name" value="LIAS_N"/>
    <property type="match status" value="1"/>
</dbReference>
<dbReference type="Pfam" id="PF04055">
    <property type="entry name" value="Radical_SAM"/>
    <property type="match status" value="1"/>
</dbReference>
<dbReference type="PIRSF" id="PIRSF005963">
    <property type="entry name" value="Lipoyl_synth"/>
    <property type="match status" value="1"/>
</dbReference>
<dbReference type="SFLD" id="SFLDF00271">
    <property type="entry name" value="lipoyl_synthase"/>
    <property type="match status" value="1"/>
</dbReference>
<dbReference type="SFLD" id="SFLDS00029">
    <property type="entry name" value="Radical_SAM"/>
    <property type="match status" value="1"/>
</dbReference>
<dbReference type="SMART" id="SM00729">
    <property type="entry name" value="Elp3"/>
    <property type="match status" value="1"/>
</dbReference>
<dbReference type="SUPFAM" id="SSF102114">
    <property type="entry name" value="Radical SAM enzymes"/>
    <property type="match status" value="1"/>
</dbReference>
<dbReference type="PROSITE" id="PS51918">
    <property type="entry name" value="RADICAL_SAM"/>
    <property type="match status" value="1"/>
</dbReference>
<sequence>MVTVFDAVADRAQRVRHPEKAHRPDTEVLRKPDWIRVKAPTSKGYQETRSIVKSHNLVTVCEEAGCPNIGECWDKKHATFMIMGEICTRACAFCNVATGRPNALDLDEPVNVAKAVKQMGLSHVVITSVDRDDLEDGGAEHFERVIFAIREASPQTTIEILTPDFLRKPGALERVVAAKPDVFNHNLETVPSNYLTVRPGARYFHSIRLLQRVKELDPTMFTKSGIMVGLGEERNEVLQLMDDLRTADVDFLTIGQYLQPTRKHHKVEKFVTPDEFKSYETVAYTKGFLMVSSSPLTRSSHHAGDDFARLKAAREKKLLAAAE</sequence>
<proteinExistence type="inferred from homology"/>
<name>LIPA_SINMW</name>
<accession>A6U8F5</accession>
<comment type="function">
    <text evidence="1">Catalyzes the radical-mediated insertion of two sulfur atoms into the C-6 and C-8 positions of the octanoyl moiety bound to the lipoyl domains of lipoate-dependent enzymes, thereby converting the octanoylated domains into lipoylated derivatives.</text>
</comment>
<comment type="catalytic activity">
    <reaction evidence="1">
        <text>[[Fe-S] cluster scaffold protein carrying a second [4Fe-4S](2+) cluster] + N(6)-octanoyl-L-lysyl-[protein] + 2 oxidized [2Fe-2S]-[ferredoxin] + 2 S-adenosyl-L-methionine + 4 H(+) = [[Fe-S] cluster scaffold protein] + N(6)-[(R)-dihydrolipoyl]-L-lysyl-[protein] + 4 Fe(3+) + 2 hydrogen sulfide + 2 5'-deoxyadenosine + 2 L-methionine + 2 reduced [2Fe-2S]-[ferredoxin]</text>
        <dbReference type="Rhea" id="RHEA:16585"/>
        <dbReference type="Rhea" id="RHEA-COMP:9928"/>
        <dbReference type="Rhea" id="RHEA-COMP:10000"/>
        <dbReference type="Rhea" id="RHEA-COMP:10001"/>
        <dbReference type="Rhea" id="RHEA-COMP:10475"/>
        <dbReference type="Rhea" id="RHEA-COMP:14568"/>
        <dbReference type="Rhea" id="RHEA-COMP:14569"/>
        <dbReference type="ChEBI" id="CHEBI:15378"/>
        <dbReference type="ChEBI" id="CHEBI:17319"/>
        <dbReference type="ChEBI" id="CHEBI:29034"/>
        <dbReference type="ChEBI" id="CHEBI:29919"/>
        <dbReference type="ChEBI" id="CHEBI:33722"/>
        <dbReference type="ChEBI" id="CHEBI:33737"/>
        <dbReference type="ChEBI" id="CHEBI:33738"/>
        <dbReference type="ChEBI" id="CHEBI:57844"/>
        <dbReference type="ChEBI" id="CHEBI:59789"/>
        <dbReference type="ChEBI" id="CHEBI:78809"/>
        <dbReference type="ChEBI" id="CHEBI:83100"/>
        <dbReference type="EC" id="2.8.1.8"/>
    </reaction>
</comment>
<comment type="cofactor">
    <cofactor evidence="1">
        <name>[4Fe-4S] cluster</name>
        <dbReference type="ChEBI" id="CHEBI:49883"/>
    </cofactor>
    <text evidence="1">Binds 2 [4Fe-4S] clusters per subunit. One cluster is coordinated with 3 cysteines and an exchangeable S-adenosyl-L-methionine.</text>
</comment>
<comment type="pathway">
    <text evidence="1">Protein modification; protein lipoylation via endogenous pathway; protein N(6)-(lipoyl)lysine from octanoyl-[acyl-carrier-protein]: step 2/2.</text>
</comment>
<comment type="subcellular location">
    <subcellularLocation>
        <location evidence="1">Cytoplasm</location>
    </subcellularLocation>
</comment>
<comment type="similarity">
    <text evidence="1">Belongs to the radical SAM superfamily. Lipoyl synthase family.</text>
</comment>
<gene>
    <name evidence="1" type="primary">lipA</name>
    <name type="ordered locus">Smed_1083</name>
</gene>
<protein>
    <recommendedName>
        <fullName evidence="1">Lipoyl synthase</fullName>
        <ecNumber evidence="1">2.8.1.8</ecNumber>
    </recommendedName>
    <alternativeName>
        <fullName evidence="1">Lip-syn</fullName>
        <shortName evidence="1">LS</shortName>
    </alternativeName>
    <alternativeName>
        <fullName evidence="1">Lipoate synthase</fullName>
    </alternativeName>
    <alternativeName>
        <fullName evidence="1">Lipoic acid synthase</fullName>
    </alternativeName>
    <alternativeName>
        <fullName evidence="1">Sulfur insertion protein LipA</fullName>
    </alternativeName>
</protein>
<evidence type="ECO:0000255" key="1">
    <source>
        <dbReference type="HAMAP-Rule" id="MF_00206"/>
    </source>
</evidence>
<evidence type="ECO:0000255" key="2">
    <source>
        <dbReference type="PROSITE-ProRule" id="PRU01266"/>
    </source>
</evidence>
<organism>
    <name type="scientific">Sinorhizobium medicae (strain WSM419)</name>
    <name type="common">Ensifer medicae</name>
    <dbReference type="NCBI Taxonomy" id="366394"/>
    <lineage>
        <taxon>Bacteria</taxon>
        <taxon>Pseudomonadati</taxon>
        <taxon>Pseudomonadota</taxon>
        <taxon>Alphaproteobacteria</taxon>
        <taxon>Hyphomicrobiales</taxon>
        <taxon>Rhizobiaceae</taxon>
        <taxon>Sinorhizobium/Ensifer group</taxon>
        <taxon>Sinorhizobium</taxon>
    </lineage>
</organism>
<keyword id="KW-0004">4Fe-4S</keyword>
<keyword id="KW-0963">Cytoplasm</keyword>
<keyword id="KW-0408">Iron</keyword>
<keyword id="KW-0411">Iron-sulfur</keyword>
<keyword id="KW-0479">Metal-binding</keyword>
<keyword id="KW-0949">S-adenosyl-L-methionine</keyword>
<keyword id="KW-0808">Transferase</keyword>
<reference key="1">
    <citation type="submission" date="2007-06" db="EMBL/GenBank/DDBJ databases">
        <title>Complete sequence of Sinorhizobium medicae WSM419 chromosome.</title>
        <authorList>
            <consortium name="US DOE Joint Genome Institute"/>
            <person name="Copeland A."/>
            <person name="Lucas S."/>
            <person name="Lapidus A."/>
            <person name="Barry K."/>
            <person name="Glavina del Rio T."/>
            <person name="Dalin E."/>
            <person name="Tice H."/>
            <person name="Pitluck S."/>
            <person name="Chain P."/>
            <person name="Malfatti S."/>
            <person name="Shin M."/>
            <person name="Vergez L."/>
            <person name="Schmutz J."/>
            <person name="Larimer F."/>
            <person name="Land M."/>
            <person name="Hauser L."/>
            <person name="Kyrpides N."/>
            <person name="Mikhailova N."/>
            <person name="Reeve W.G."/>
            <person name="Richardson P."/>
        </authorList>
    </citation>
    <scope>NUCLEOTIDE SEQUENCE [LARGE SCALE GENOMIC DNA]</scope>
    <source>
        <strain>WSM419</strain>
    </source>
</reference>